<protein>
    <recommendedName>
        <fullName evidence="4">Staphyloferrin B synthase</fullName>
        <ecNumber evidence="2">6.3.2.56</ecNumber>
    </recommendedName>
    <alternativeName>
        <fullName evidence="4">Staphyloferrin B biosynthesis protein SbnC</fullName>
    </alternativeName>
</protein>
<name>SBNC_STAA8</name>
<gene>
    <name evidence="3" type="primary">sbnC</name>
    <name evidence="5" type="ordered locus">SAOUHSC_00077</name>
</gene>
<accession>Q2G1N1</accession>
<accession>Q6X7U5</accession>
<evidence type="ECO:0000269" key="1">
    <source>
    </source>
</evidence>
<evidence type="ECO:0000269" key="2">
    <source>
    </source>
</evidence>
<evidence type="ECO:0000303" key="3">
    <source>
    </source>
</evidence>
<evidence type="ECO:0000305" key="4"/>
<evidence type="ECO:0000312" key="5">
    <source>
        <dbReference type="EMBL" id="ABD29260.1"/>
    </source>
</evidence>
<evidence type="ECO:0007829" key="6">
    <source>
        <dbReference type="PDB" id="7CBB"/>
    </source>
</evidence>
<reference key="1">
    <citation type="journal article" date="2004" name="Infect. Immun.">
        <title>Role of siderophore biosynthesis in virulence of Staphylococcus aureus: identification and characterization of genes involved in production of a siderophore.</title>
        <authorList>
            <person name="Dale S.E."/>
            <person name="Doherty-Kirby A."/>
            <person name="Lajoie G."/>
            <person name="Heinrichs D.E."/>
        </authorList>
    </citation>
    <scope>NUCLEOTIDE SEQUENCE [GENOMIC DNA]</scope>
    <scope>INDUCTION</scope>
</reference>
<reference key="2">
    <citation type="book" date="2006" name="Gram positive pathogens, 2nd edition">
        <title>The Staphylococcus aureus NCTC 8325 genome.</title>
        <editorList>
            <person name="Fischetti V."/>
            <person name="Novick R."/>
            <person name="Ferretti J."/>
            <person name="Portnoy D."/>
            <person name="Rood J."/>
        </editorList>
        <authorList>
            <person name="Gillaspy A.F."/>
            <person name="Worrell V."/>
            <person name="Orvis J."/>
            <person name="Roe B.A."/>
            <person name="Dyer D.W."/>
            <person name="Iandolo J.J."/>
        </authorList>
    </citation>
    <scope>NUCLEOTIDE SEQUENCE [LARGE SCALE GENOMIC DNA]</scope>
    <source>
        <strain>NCTC 8325 / PS 47</strain>
    </source>
</reference>
<reference key="3">
    <citation type="journal article" date="2009" name="Mol. Microbiol.">
        <title>Molecular characterization of staphyloferrin B biosynthesis in Staphylococcus aureus.</title>
        <authorList>
            <person name="Cheung J."/>
            <person name="Beasley F.C."/>
            <person name="Liu S."/>
            <person name="Lajoie G.A."/>
            <person name="Heinrichs D.E."/>
        </authorList>
    </citation>
    <scope>FUNCTION</scope>
    <scope>CATALYTIC ACTIVITY</scope>
    <scope>PATHWAY</scope>
    <scope>SUBUNIT</scope>
</reference>
<keyword id="KW-0002">3D-structure</keyword>
<keyword id="KW-0067">ATP-binding</keyword>
<keyword id="KW-0436">Ligase</keyword>
<keyword id="KW-0547">Nucleotide-binding</keyword>
<keyword id="KW-1185">Reference proteome</keyword>
<proteinExistence type="evidence at protein level"/>
<comment type="function">
    <text evidence="2">Catalyzes the condensation of L-2,3-diaminopropionyl-citryl-diaminoethane and 2-oxoglutarate to form staphyloferrin B, the fourth and last step in staphyloferrin B biosynthesis.</text>
</comment>
<comment type="catalytic activity">
    <reaction evidence="2">
        <text>2-[(L-alanin-3-ylcarbamoyl)methyl]-3-(2-aminoethylcarbamoyl)-2-hydroxypropanoate + 2-oxoglutarate + ATP = staphyloferrin B + AMP + diphosphate + H(+)</text>
        <dbReference type="Rhea" id="RHEA:59132"/>
        <dbReference type="ChEBI" id="CHEBI:15378"/>
        <dbReference type="ChEBI" id="CHEBI:16810"/>
        <dbReference type="ChEBI" id="CHEBI:30616"/>
        <dbReference type="ChEBI" id="CHEBI:33019"/>
        <dbReference type="ChEBI" id="CHEBI:136993"/>
        <dbReference type="ChEBI" id="CHEBI:142971"/>
        <dbReference type="ChEBI" id="CHEBI:456215"/>
        <dbReference type="EC" id="6.3.2.56"/>
    </reaction>
    <physiologicalReaction direction="left-to-right" evidence="2">
        <dbReference type="Rhea" id="RHEA:59133"/>
    </physiologicalReaction>
</comment>
<comment type="pathway">
    <text evidence="2">Siderophore biosynthesis.</text>
</comment>
<comment type="subunit">
    <text evidence="2">Forms a mixture of monomer and dimer in solution.</text>
</comment>
<comment type="induction">
    <text evidence="1">Up-regulated under iron-deficient growth conditions. Repressed by Fur under iron-rich growth conditions.</text>
</comment>
<comment type="similarity">
    <text evidence="4">Belongs to the IucA/IucC family.</text>
</comment>
<dbReference type="EC" id="6.3.2.56" evidence="2"/>
<dbReference type="EMBL" id="AY251022">
    <property type="protein sequence ID" value="AAP82065.1"/>
    <property type="molecule type" value="Genomic_DNA"/>
</dbReference>
<dbReference type="EMBL" id="CP000253">
    <property type="protein sequence ID" value="ABD29260.1"/>
    <property type="molecule type" value="Genomic_DNA"/>
</dbReference>
<dbReference type="RefSeq" id="WP_001179384.1">
    <property type="nucleotide sequence ID" value="NZ_LS483365.1"/>
</dbReference>
<dbReference type="RefSeq" id="YP_498677.1">
    <property type="nucleotide sequence ID" value="NC_007795.1"/>
</dbReference>
<dbReference type="PDB" id="7CBB">
    <property type="method" value="X-ray"/>
    <property type="resolution" value="2.60 A"/>
    <property type="chains" value="A/B=1-584"/>
</dbReference>
<dbReference type="PDBsum" id="7CBB"/>
<dbReference type="SMR" id="Q2G1N1"/>
<dbReference type="STRING" id="93061.SAOUHSC_00077"/>
<dbReference type="PaxDb" id="1280-SAXN108_0104"/>
<dbReference type="GeneID" id="3919455"/>
<dbReference type="KEGG" id="sao:SAOUHSC_00077"/>
<dbReference type="PATRIC" id="fig|1280.3350.peg.96"/>
<dbReference type="eggNOG" id="COG4264">
    <property type="taxonomic scope" value="Bacteria"/>
</dbReference>
<dbReference type="HOGENOM" id="CLU_030178_0_0_9"/>
<dbReference type="OrthoDB" id="495728at2"/>
<dbReference type="BioCyc" id="MetaCyc:G1I0R-71-MONOMER"/>
<dbReference type="BRENDA" id="6.3.2.56">
    <property type="organism ID" value="3352"/>
</dbReference>
<dbReference type="Proteomes" id="UP000008816">
    <property type="component" value="Chromosome"/>
</dbReference>
<dbReference type="GO" id="GO:0016881">
    <property type="term" value="F:acid-amino acid ligase activity"/>
    <property type="evidence" value="ECO:0000314"/>
    <property type="project" value="UniProtKB"/>
</dbReference>
<dbReference type="GO" id="GO:0005524">
    <property type="term" value="F:ATP binding"/>
    <property type="evidence" value="ECO:0007669"/>
    <property type="project" value="UniProtKB-KW"/>
</dbReference>
<dbReference type="GO" id="GO:0019290">
    <property type="term" value="P:siderophore biosynthetic process"/>
    <property type="evidence" value="ECO:0000314"/>
    <property type="project" value="UniProtKB"/>
</dbReference>
<dbReference type="Gene3D" id="1.10.510.40">
    <property type="match status" value="1"/>
</dbReference>
<dbReference type="InterPro" id="IPR007310">
    <property type="entry name" value="Aerobactin_biosyn_IucA/IucC_N"/>
</dbReference>
<dbReference type="InterPro" id="IPR022770">
    <property type="entry name" value="IucA/IucC-like_C"/>
</dbReference>
<dbReference type="InterPro" id="IPR037455">
    <property type="entry name" value="LucA/IucC-like"/>
</dbReference>
<dbReference type="NCBIfam" id="NF033583">
    <property type="entry name" value="staphy_B_SbnC"/>
    <property type="match status" value="1"/>
</dbReference>
<dbReference type="PANTHER" id="PTHR34384">
    <property type="entry name" value="L-2,3-DIAMINOPROPANOATE--CITRATE LIGASE"/>
    <property type="match status" value="1"/>
</dbReference>
<dbReference type="PANTHER" id="PTHR34384:SF6">
    <property type="entry name" value="STAPHYLOFERRIN B SYNTHASE"/>
    <property type="match status" value="1"/>
</dbReference>
<dbReference type="Pfam" id="PF06276">
    <property type="entry name" value="FhuF"/>
    <property type="match status" value="1"/>
</dbReference>
<dbReference type="Pfam" id="PF04183">
    <property type="entry name" value="IucA_IucC"/>
    <property type="match status" value="1"/>
</dbReference>
<organism>
    <name type="scientific">Staphylococcus aureus (strain NCTC 8325 / PS 47)</name>
    <dbReference type="NCBI Taxonomy" id="93061"/>
    <lineage>
        <taxon>Bacteria</taxon>
        <taxon>Bacillati</taxon>
        <taxon>Bacillota</taxon>
        <taxon>Bacilli</taxon>
        <taxon>Bacillales</taxon>
        <taxon>Staphylococcaceae</taxon>
        <taxon>Staphylococcus</taxon>
    </lineage>
</organism>
<feature type="chain" id="PRO_0000447125" description="Staphyloferrin B synthase">
    <location>
        <begin position="1"/>
        <end position="584"/>
    </location>
</feature>
<feature type="helix" evidence="6">
    <location>
        <begin position="4"/>
        <end position="25"/>
    </location>
</feature>
<feature type="helix" evidence="6">
    <location>
        <begin position="27"/>
        <end position="29"/>
    </location>
</feature>
<feature type="turn" evidence="6">
    <location>
        <begin position="30"/>
        <end position="33"/>
    </location>
</feature>
<feature type="strand" evidence="6">
    <location>
        <begin position="34"/>
        <end position="39"/>
    </location>
</feature>
<feature type="strand" evidence="6">
    <location>
        <begin position="42"/>
        <end position="49"/>
    </location>
</feature>
<feature type="strand" evidence="6">
    <location>
        <begin position="52"/>
        <end position="60"/>
    </location>
</feature>
<feature type="strand" evidence="6">
    <location>
        <begin position="64"/>
        <end position="68"/>
    </location>
</feature>
<feature type="helix" evidence="6">
    <location>
        <begin position="87"/>
        <end position="96"/>
    </location>
</feature>
<feature type="helix" evidence="6">
    <location>
        <begin position="99"/>
        <end position="102"/>
    </location>
</feature>
<feature type="helix" evidence="6">
    <location>
        <begin position="107"/>
        <end position="126"/>
    </location>
</feature>
<feature type="helix" evidence="6">
    <location>
        <begin position="134"/>
        <end position="145"/>
    </location>
</feature>
<feature type="turn" evidence="6">
    <location>
        <begin position="151"/>
        <end position="154"/>
    </location>
</feature>
<feature type="helix" evidence="6">
    <location>
        <begin position="161"/>
        <end position="167"/>
    </location>
</feature>
<feature type="helix" evidence="6">
    <location>
        <begin position="169"/>
        <end position="171"/>
    </location>
</feature>
<feature type="strand" evidence="6">
    <location>
        <begin position="175"/>
        <end position="183"/>
    </location>
</feature>
<feature type="strand" evidence="6">
    <location>
        <begin position="186"/>
        <end position="189"/>
    </location>
</feature>
<feature type="helix" evidence="6">
    <location>
        <begin position="195"/>
        <end position="202"/>
    </location>
</feature>
<feature type="helix" evidence="6">
    <location>
        <begin position="203"/>
        <end position="205"/>
    </location>
</feature>
<feature type="helix" evidence="6">
    <location>
        <begin position="206"/>
        <end position="214"/>
    </location>
</feature>
<feature type="turn" evidence="6">
    <location>
        <begin position="215"/>
        <end position="217"/>
    </location>
</feature>
<feature type="helix" evidence="6">
    <location>
        <begin position="220"/>
        <end position="222"/>
    </location>
</feature>
<feature type="strand" evidence="6">
    <location>
        <begin position="223"/>
        <end position="228"/>
    </location>
</feature>
<feature type="helix" evidence="6">
    <location>
        <begin position="230"/>
        <end position="235"/>
    </location>
</feature>
<feature type="helix" evidence="6">
    <location>
        <begin position="237"/>
        <end position="240"/>
    </location>
</feature>
<feature type="helix" evidence="6">
    <location>
        <begin position="242"/>
        <end position="246"/>
    </location>
</feature>
<feature type="strand" evidence="6">
    <location>
        <begin position="249"/>
        <end position="262"/>
    </location>
</feature>
<feature type="strand" evidence="6">
    <location>
        <begin position="264"/>
        <end position="271"/>
    </location>
</feature>
<feature type="strand" evidence="6">
    <location>
        <begin position="274"/>
        <end position="280"/>
    </location>
</feature>
<feature type="helix" evidence="6">
    <location>
        <begin position="296"/>
        <end position="315"/>
    </location>
</feature>
<feature type="helix" evidence="6">
    <location>
        <begin position="317"/>
        <end position="322"/>
    </location>
</feature>
<feature type="strand" evidence="6">
    <location>
        <begin position="323"/>
        <end position="325"/>
    </location>
</feature>
<feature type="strand" evidence="6">
    <location>
        <begin position="331"/>
        <end position="334"/>
    </location>
</feature>
<feature type="helix" evidence="6">
    <location>
        <begin position="344"/>
        <end position="348"/>
    </location>
</feature>
<feature type="strand" evidence="6">
    <location>
        <begin position="349"/>
        <end position="355"/>
    </location>
</feature>
<feature type="helix" evidence="6">
    <location>
        <begin position="358"/>
        <end position="361"/>
    </location>
</feature>
<feature type="strand" evidence="6">
    <location>
        <begin position="364"/>
        <end position="370"/>
    </location>
</feature>
<feature type="helix" evidence="6">
    <location>
        <begin position="373"/>
        <end position="375"/>
    </location>
</feature>
<feature type="helix" evidence="6">
    <location>
        <begin position="380"/>
        <end position="386"/>
    </location>
</feature>
<feature type="helix" evidence="6">
    <location>
        <begin position="393"/>
        <end position="415"/>
    </location>
</feature>
<feature type="turn" evidence="6">
    <location>
        <begin position="416"/>
        <end position="418"/>
    </location>
</feature>
<feature type="turn" evidence="6">
    <location>
        <begin position="425"/>
        <end position="427"/>
    </location>
</feature>
<feature type="strand" evidence="6">
    <location>
        <begin position="428"/>
        <end position="433"/>
    </location>
</feature>
<feature type="strand" evidence="6">
    <location>
        <begin position="436"/>
        <end position="442"/>
    </location>
</feature>
<feature type="helix" evidence="6">
    <location>
        <begin position="445"/>
        <end position="447"/>
    </location>
</feature>
<feature type="helix" evidence="6">
    <location>
        <begin position="452"/>
        <end position="457"/>
    </location>
</feature>
<feature type="strand" evidence="6">
    <location>
        <begin position="474"/>
        <end position="476"/>
    </location>
</feature>
<feature type="helix" evidence="6">
    <location>
        <begin position="480"/>
        <end position="490"/>
    </location>
</feature>
<feature type="turn" evidence="6">
    <location>
        <begin position="491"/>
        <end position="494"/>
    </location>
</feature>
<feature type="helix" evidence="6">
    <location>
        <begin position="495"/>
        <end position="507"/>
    </location>
</feature>
<feature type="helix" evidence="6">
    <location>
        <begin position="511"/>
        <end position="528"/>
    </location>
</feature>
<feature type="turn" evidence="6">
    <location>
        <begin position="533"/>
        <end position="535"/>
    </location>
</feature>
<feature type="helix" evidence="6">
    <location>
        <begin position="536"/>
        <end position="543"/>
    </location>
</feature>
<feature type="strand" evidence="6">
    <location>
        <begin position="546"/>
        <end position="552"/>
    </location>
</feature>
<feature type="helix" evidence="6">
    <location>
        <begin position="555"/>
        <end position="560"/>
    </location>
</feature>
<feature type="strand" evidence="6">
    <location>
        <begin position="572"/>
        <end position="577"/>
    </location>
</feature>
<sequence length="584" mass="66433">MQNHTAVNTAQAIILRDLVDALLFEDIAGIVSNSEITKENGQTLLIYERETQQIKIPVYFSALNMFRYESSQPITIEGRVSKQPLTAAEFWQTIANMNCDLSHEWEVARVEEGLTTAATQLAKQLSELDLASHPFVMSEQFASLKDRPFHPLAKEKRGLREADYQVYQAELNQSFPLMVAAVKKTHMIHGDTANIDELENLTVPIKEQATDMLNDQGLSIDDYVLFPVHPWQYQHILPNVFAKEISEKLVVLLPLKFGDYLSSSSMRSLIDIGAPYNHVKVPFAMQSLGALRLTPTRYMKNGEQAEQLLRQLIEKDEALAKYVMVCDETAWWSYMGQDNDIFKDQLGHLTVQLRKYPEVLAKNDTQQLVSMAALAANDRTLYQMICGKDNISKNDVMTLFEDIAQVFLKVTLSFMQYGALPELHGQNILLSFEDGRVQKCVLRDHDTVRIYKPWLTAHQLSLPKYVVREDTPNTLINEDLETFFAYFQTLAVSVNLYAIIDAIQDLFGVSEHELMSLLKQILKNEVATISWVTTDQLAVRHILFDKQTWPFKQILLPLLYQRDSGGGSMPSGLTTVPNPMVTYD</sequence>